<protein>
    <recommendedName>
        <fullName evidence="1">Phenylalanine--tRNA ligase beta subunit</fullName>
        <ecNumber evidence="1">6.1.1.20</ecNumber>
    </recommendedName>
    <alternativeName>
        <fullName evidence="1">Phenylalanyl-tRNA synthetase beta subunit</fullName>
        <shortName evidence="1">PheRS</shortName>
    </alternativeName>
</protein>
<organism>
    <name type="scientific">Dehalococcoides mccartyi (strain CBDB1)</name>
    <dbReference type="NCBI Taxonomy" id="255470"/>
    <lineage>
        <taxon>Bacteria</taxon>
        <taxon>Bacillati</taxon>
        <taxon>Chloroflexota</taxon>
        <taxon>Dehalococcoidia</taxon>
        <taxon>Dehalococcoidales</taxon>
        <taxon>Dehalococcoidaceae</taxon>
        <taxon>Dehalococcoides</taxon>
    </lineage>
</organism>
<proteinExistence type="inferred from homology"/>
<name>SYFB_DEHMC</name>
<feature type="chain" id="PRO_0000232059" description="Phenylalanine--tRNA ligase beta subunit">
    <location>
        <begin position="1"/>
        <end position="809"/>
    </location>
</feature>
<feature type="domain" description="tRNA-binding" evidence="1">
    <location>
        <begin position="39"/>
        <end position="152"/>
    </location>
</feature>
<feature type="domain" description="B5" evidence="1">
    <location>
        <begin position="404"/>
        <end position="492"/>
    </location>
</feature>
<feature type="domain" description="FDX-ACB" evidence="1">
    <location>
        <begin position="717"/>
        <end position="808"/>
    </location>
</feature>
<feature type="binding site" evidence="1">
    <location>
        <position position="470"/>
    </location>
    <ligand>
        <name>Mg(2+)</name>
        <dbReference type="ChEBI" id="CHEBI:18420"/>
        <note>shared with alpha subunit</note>
    </ligand>
</feature>
<feature type="binding site" evidence="1">
    <location>
        <position position="476"/>
    </location>
    <ligand>
        <name>Mg(2+)</name>
        <dbReference type="ChEBI" id="CHEBI:18420"/>
        <note>shared with alpha subunit</note>
    </ligand>
</feature>
<feature type="binding site" evidence="1">
    <location>
        <position position="479"/>
    </location>
    <ligand>
        <name>Mg(2+)</name>
        <dbReference type="ChEBI" id="CHEBI:18420"/>
        <note>shared with alpha subunit</note>
    </ligand>
</feature>
<feature type="binding site" evidence="1">
    <location>
        <position position="480"/>
    </location>
    <ligand>
        <name>Mg(2+)</name>
        <dbReference type="ChEBI" id="CHEBI:18420"/>
        <note>shared with alpha subunit</note>
    </ligand>
</feature>
<accession>Q3ZZD2</accession>
<evidence type="ECO:0000255" key="1">
    <source>
        <dbReference type="HAMAP-Rule" id="MF_00283"/>
    </source>
</evidence>
<comment type="catalytic activity">
    <reaction evidence="1">
        <text>tRNA(Phe) + L-phenylalanine + ATP = L-phenylalanyl-tRNA(Phe) + AMP + diphosphate + H(+)</text>
        <dbReference type="Rhea" id="RHEA:19413"/>
        <dbReference type="Rhea" id="RHEA-COMP:9668"/>
        <dbReference type="Rhea" id="RHEA-COMP:9699"/>
        <dbReference type="ChEBI" id="CHEBI:15378"/>
        <dbReference type="ChEBI" id="CHEBI:30616"/>
        <dbReference type="ChEBI" id="CHEBI:33019"/>
        <dbReference type="ChEBI" id="CHEBI:58095"/>
        <dbReference type="ChEBI" id="CHEBI:78442"/>
        <dbReference type="ChEBI" id="CHEBI:78531"/>
        <dbReference type="ChEBI" id="CHEBI:456215"/>
        <dbReference type="EC" id="6.1.1.20"/>
    </reaction>
</comment>
<comment type="cofactor">
    <cofactor evidence="1">
        <name>Mg(2+)</name>
        <dbReference type="ChEBI" id="CHEBI:18420"/>
    </cofactor>
    <text evidence="1">Binds 2 magnesium ions per tetramer.</text>
</comment>
<comment type="subunit">
    <text evidence="1">Tetramer of two alpha and two beta subunits.</text>
</comment>
<comment type="subcellular location">
    <subcellularLocation>
        <location evidence="1">Cytoplasm</location>
    </subcellularLocation>
</comment>
<comment type="similarity">
    <text evidence="1">Belongs to the phenylalanyl-tRNA synthetase beta subunit family. Type 1 subfamily.</text>
</comment>
<dbReference type="EC" id="6.1.1.20" evidence="1"/>
<dbReference type="EMBL" id="AJ965256">
    <property type="protein sequence ID" value="CAI82534.1"/>
    <property type="molecule type" value="Genomic_DNA"/>
</dbReference>
<dbReference type="RefSeq" id="WP_011308891.1">
    <property type="nucleotide sequence ID" value="NC_007356.1"/>
</dbReference>
<dbReference type="SMR" id="Q3ZZD2"/>
<dbReference type="KEGG" id="deh:cbdbA308"/>
<dbReference type="HOGENOM" id="CLU_016891_0_0_0"/>
<dbReference type="Proteomes" id="UP000000433">
    <property type="component" value="Chromosome"/>
</dbReference>
<dbReference type="GO" id="GO:0009328">
    <property type="term" value="C:phenylalanine-tRNA ligase complex"/>
    <property type="evidence" value="ECO:0007669"/>
    <property type="project" value="TreeGrafter"/>
</dbReference>
<dbReference type="GO" id="GO:0005524">
    <property type="term" value="F:ATP binding"/>
    <property type="evidence" value="ECO:0007669"/>
    <property type="project" value="UniProtKB-UniRule"/>
</dbReference>
<dbReference type="GO" id="GO:0000287">
    <property type="term" value="F:magnesium ion binding"/>
    <property type="evidence" value="ECO:0007669"/>
    <property type="project" value="UniProtKB-UniRule"/>
</dbReference>
<dbReference type="GO" id="GO:0004826">
    <property type="term" value="F:phenylalanine-tRNA ligase activity"/>
    <property type="evidence" value="ECO:0007669"/>
    <property type="project" value="UniProtKB-UniRule"/>
</dbReference>
<dbReference type="GO" id="GO:0000049">
    <property type="term" value="F:tRNA binding"/>
    <property type="evidence" value="ECO:0007669"/>
    <property type="project" value="UniProtKB-KW"/>
</dbReference>
<dbReference type="GO" id="GO:0006432">
    <property type="term" value="P:phenylalanyl-tRNA aminoacylation"/>
    <property type="evidence" value="ECO:0007669"/>
    <property type="project" value="UniProtKB-UniRule"/>
</dbReference>
<dbReference type="CDD" id="cd00769">
    <property type="entry name" value="PheRS_beta_core"/>
    <property type="match status" value="1"/>
</dbReference>
<dbReference type="CDD" id="cd02796">
    <property type="entry name" value="tRNA_bind_bactPheRS"/>
    <property type="match status" value="1"/>
</dbReference>
<dbReference type="FunFam" id="2.40.50.140:FF:000045">
    <property type="entry name" value="Phenylalanine--tRNA ligase beta subunit"/>
    <property type="match status" value="1"/>
</dbReference>
<dbReference type="FunFam" id="3.30.70.380:FF:000001">
    <property type="entry name" value="Phenylalanine--tRNA ligase beta subunit"/>
    <property type="match status" value="1"/>
</dbReference>
<dbReference type="FunFam" id="3.50.40.10:FF:000001">
    <property type="entry name" value="Phenylalanine--tRNA ligase beta subunit"/>
    <property type="match status" value="1"/>
</dbReference>
<dbReference type="Gene3D" id="3.30.56.10">
    <property type="match status" value="2"/>
</dbReference>
<dbReference type="Gene3D" id="3.30.930.10">
    <property type="entry name" value="Bira Bifunctional Protein, Domain 2"/>
    <property type="match status" value="1"/>
</dbReference>
<dbReference type="Gene3D" id="3.30.70.380">
    <property type="entry name" value="Ferrodoxin-fold anticodon-binding domain"/>
    <property type="match status" value="1"/>
</dbReference>
<dbReference type="Gene3D" id="2.40.50.140">
    <property type="entry name" value="Nucleic acid-binding proteins"/>
    <property type="match status" value="1"/>
</dbReference>
<dbReference type="Gene3D" id="3.50.40.10">
    <property type="entry name" value="Phenylalanyl-trna Synthetase, Chain B, domain 3"/>
    <property type="match status" value="1"/>
</dbReference>
<dbReference type="HAMAP" id="MF_00283">
    <property type="entry name" value="Phe_tRNA_synth_beta1"/>
    <property type="match status" value="1"/>
</dbReference>
<dbReference type="InterPro" id="IPR045864">
    <property type="entry name" value="aa-tRNA-synth_II/BPL/LPL"/>
</dbReference>
<dbReference type="InterPro" id="IPR005146">
    <property type="entry name" value="B3/B4_tRNA-bd"/>
</dbReference>
<dbReference type="InterPro" id="IPR009061">
    <property type="entry name" value="DNA-bd_dom_put_sf"/>
</dbReference>
<dbReference type="InterPro" id="IPR005121">
    <property type="entry name" value="Fdx_antiC-bd"/>
</dbReference>
<dbReference type="InterPro" id="IPR036690">
    <property type="entry name" value="Fdx_antiC-bd_sf"/>
</dbReference>
<dbReference type="InterPro" id="IPR012340">
    <property type="entry name" value="NA-bd_OB-fold"/>
</dbReference>
<dbReference type="InterPro" id="IPR045060">
    <property type="entry name" value="Phe-tRNA-ligase_IIc_bsu"/>
</dbReference>
<dbReference type="InterPro" id="IPR004532">
    <property type="entry name" value="Phe-tRNA-ligase_IIc_bsu_bact"/>
</dbReference>
<dbReference type="InterPro" id="IPR020825">
    <property type="entry name" value="Phe-tRNA_synthase-like_B3/B4"/>
</dbReference>
<dbReference type="InterPro" id="IPR041616">
    <property type="entry name" value="PheRS_beta_core"/>
</dbReference>
<dbReference type="InterPro" id="IPR002547">
    <property type="entry name" value="tRNA-bd_dom"/>
</dbReference>
<dbReference type="InterPro" id="IPR033714">
    <property type="entry name" value="tRNA_bind_bactPheRS"/>
</dbReference>
<dbReference type="InterPro" id="IPR005147">
    <property type="entry name" value="tRNA_synthase_B5-dom"/>
</dbReference>
<dbReference type="NCBIfam" id="TIGR00472">
    <property type="entry name" value="pheT_bact"/>
    <property type="match status" value="1"/>
</dbReference>
<dbReference type="PANTHER" id="PTHR10947:SF0">
    <property type="entry name" value="PHENYLALANINE--TRNA LIGASE BETA SUBUNIT"/>
    <property type="match status" value="1"/>
</dbReference>
<dbReference type="PANTHER" id="PTHR10947">
    <property type="entry name" value="PHENYLALANYL-TRNA SYNTHETASE BETA CHAIN AND LEUCINE-RICH REPEAT-CONTAINING PROTEIN 47"/>
    <property type="match status" value="1"/>
</dbReference>
<dbReference type="Pfam" id="PF03483">
    <property type="entry name" value="B3_4"/>
    <property type="match status" value="1"/>
</dbReference>
<dbReference type="Pfam" id="PF03484">
    <property type="entry name" value="B5"/>
    <property type="match status" value="1"/>
</dbReference>
<dbReference type="Pfam" id="PF03147">
    <property type="entry name" value="FDX-ACB"/>
    <property type="match status" value="1"/>
</dbReference>
<dbReference type="Pfam" id="PF01588">
    <property type="entry name" value="tRNA_bind"/>
    <property type="match status" value="1"/>
</dbReference>
<dbReference type="Pfam" id="PF17759">
    <property type="entry name" value="tRNA_synthFbeta"/>
    <property type="match status" value="1"/>
</dbReference>
<dbReference type="SMART" id="SM00873">
    <property type="entry name" value="B3_4"/>
    <property type="match status" value="1"/>
</dbReference>
<dbReference type="SMART" id="SM00874">
    <property type="entry name" value="B5"/>
    <property type="match status" value="1"/>
</dbReference>
<dbReference type="SMART" id="SM00896">
    <property type="entry name" value="FDX-ACB"/>
    <property type="match status" value="1"/>
</dbReference>
<dbReference type="SUPFAM" id="SSF54991">
    <property type="entry name" value="Anticodon-binding domain of PheRS"/>
    <property type="match status" value="1"/>
</dbReference>
<dbReference type="SUPFAM" id="SSF55681">
    <property type="entry name" value="Class II aaRS and biotin synthetases"/>
    <property type="match status" value="1"/>
</dbReference>
<dbReference type="SUPFAM" id="SSF50249">
    <property type="entry name" value="Nucleic acid-binding proteins"/>
    <property type="match status" value="1"/>
</dbReference>
<dbReference type="SUPFAM" id="SSF56037">
    <property type="entry name" value="PheT/TilS domain"/>
    <property type="match status" value="1"/>
</dbReference>
<dbReference type="SUPFAM" id="SSF46955">
    <property type="entry name" value="Putative DNA-binding domain"/>
    <property type="match status" value="1"/>
</dbReference>
<dbReference type="PROSITE" id="PS51483">
    <property type="entry name" value="B5"/>
    <property type="match status" value="1"/>
</dbReference>
<dbReference type="PROSITE" id="PS51447">
    <property type="entry name" value="FDX_ACB"/>
    <property type="match status" value="1"/>
</dbReference>
<dbReference type="PROSITE" id="PS50886">
    <property type="entry name" value="TRBD"/>
    <property type="match status" value="1"/>
</dbReference>
<reference key="1">
    <citation type="journal article" date="2005" name="Nat. Biotechnol.">
        <title>Genome sequence of the chlorinated compound-respiring bacterium Dehalococcoides species strain CBDB1.</title>
        <authorList>
            <person name="Kube M."/>
            <person name="Beck A."/>
            <person name="Zinder S.H."/>
            <person name="Kuhl H."/>
            <person name="Reinhardt R."/>
            <person name="Adrian L."/>
        </authorList>
    </citation>
    <scope>NUCLEOTIDE SEQUENCE [LARGE SCALE GENOMIC DNA]</scope>
    <source>
        <strain>CBDB1</strain>
    </source>
</reference>
<keyword id="KW-0030">Aminoacyl-tRNA synthetase</keyword>
<keyword id="KW-0067">ATP-binding</keyword>
<keyword id="KW-0963">Cytoplasm</keyword>
<keyword id="KW-0436">Ligase</keyword>
<keyword id="KW-0460">Magnesium</keyword>
<keyword id="KW-0479">Metal-binding</keyword>
<keyword id="KW-0547">Nucleotide-binding</keyword>
<keyword id="KW-0648">Protein biosynthesis</keyword>
<keyword id="KW-0694">RNA-binding</keyword>
<keyword id="KW-0820">tRNA-binding</keyword>
<sequence>MKIPLKWLKEYLPTDIQPAELAERMTMAGTEVAVLNSHKDKWPNVYVGQIMEVNRHPNADRLVLVKVDWGQGQETVVTGAPNCKVGDKVVFARTGAVLIDGHNGKEIVLKPAVLRGVESCGMVCSERELGLSDEHEGILVLPADALVGMLASEYLGEVILDLELTPNRGDLMCVTGVARELGALIDRLPAISDPDFKATGPDIKEKIEIEINNSKLCTRYTASLIEGIKLGESPDWLKERLIACGMRPINNVVDATNYVMLEFGQPLHAFDYDQIKSRHIIVRPAAEGEVLTTLDGVERKLSPDMLLITEPDRIIALAGVMGGENTEVTEKTSRILLESATFDKQSIRKTARGLKLQSEASARFEKGLSYELAPIALKRATQLILEIAGGQAASGLIDVLPNKKERNGIVLSLAKVNQILGYEKEPPDACKIAKRLGFIWLPEYVPGMEEFGYGATEDMVRIYPGYWRMDIETDIDMIEEVARIAGYHTIPCLPLDKAIPKIETPPLPGMKRFLRQILSGYGFQELISYSFTSREMLSRVSSGAEPEFLAISNPMSSEQEVMRTSLRPSLYASLAANRRFEKDGLRLYELGRVYLPKENKKQEEPEMLCAVIAGGSSQSRWQRNTAGFDFFDVKGIVESMVSRLGLSADFVVSDEHGLSHGYQAGILVGDMPVGILGQVSPQTADKFDITEPVYMFEINLSKLITRAMVRRKFNPINRFPAVERDLALVIDRHITNRQVIDILSEYDLVKNAELFDMYQGKQIAENKKSLAYHLLFQSDTHTLKDEEVDGVMSQILGRLNTETGAVLRS</sequence>
<gene>
    <name evidence="1" type="primary">pheT</name>
    <name type="ordered locus">cbdbA308</name>
</gene>